<feature type="signal peptide" evidence="1">
    <location>
        <begin position="1"/>
        <end position="19"/>
    </location>
</feature>
<feature type="chain" id="PRO_0000319964" description="UPF0522 protein B">
    <location>
        <begin position="20"/>
        <end position="517"/>
    </location>
</feature>
<feature type="glycosylation site" description="N-linked (GlcNAc...) asparagine" evidence="1">
    <location>
        <position position="148"/>
    </location>
</feature>
<feature type="glycosylation site" description="N-linked (GlcNAc...) asparagine" evidence="1">
    <location>
        <position position="245"/>
    </location>
</feature>
<feature type="glycosylation site" description="N-linked (GlcNAc...) asparagine" evidence="1">
    <location>
        <position position="333"/>
    </location>
</feature>
<feature type="glycosylation site" description="N-linked (GlcNAc...) asparagine" evidence="1">
    <location>
        <position position="345"/>
    </location>
</feature>
<feature type="glycosylation site" description="N-linked (GlcNAc...) asparagine" evidence="1">
    <location>
        <position position="370"/>
    </location>
</feature>
<feature type="glycosylation site" description="N-linked (GlcNAc...) asparagine" evidence="1">
    <location>
        <position position="423"/>
    </location>
</feature>
<feature type="glycosylation site" description="N-linked (GlcNAc...) asparagine" evidence="1">
    <location>
        <position position="432"/>
    </location>
</feature>
<feature type="glycosylation site" description="N-linked (GlcNAc...) asparagine" evidence="1">
    <location>
        <position position="495"/>
    </location>
</feature>
<name>U522B_DICDI</name>
<evidence type="ECO:0000255" key="1"/>
<evidence type="ECO:0000305" key="2"/>
<reference key="1">
    <citation type="journal article" date="2005" name="Nature">
        <title>The genome of the social amoeba Dictyostelium discoideum.</title>
        <authorList>
            <person name="Eichinger L."/>
            <person name="Pachebat J.A."/>
            <person name="Gloeckner G."/>
            <person name="Rajandream M.A."/>
            <person name="Sucgang R."/>
            <person name="Berriman M."/>
            <person name="Song J."/>
            <person name="Olsen R."/>
            <person name="Szafranski K."/>
            <person name="Xu Q."/>
            <person name="Tunggal B."/>
            <person name="Kummerfeld S."/>
            <person name="Madera M."/>
            <person name="Konfortov B.A."/>
            <person name="Rivero F."/>
            <person name="Bankier A.T."/>
            <person name="Lehmann R."/>
            <person name="Hamlin N."/>
            <person name="Davies R."/>
            <person name="Gaudet P."/>
            <person name="Fey P."/>
            <person name="Pilcher K."/>
            <person name="Chen G."/>
            <person name="Saunders D."/>
            <person name="Sodergren E.J."/>
            <person name="Davis P."/>
            <person name="Kerhornou A."/>
            <person name="Nie X."/>
            <person name="Hall N."/>
            <person name="Anjard C."/>
            <person name="Hemphill L."/>
            <person name="Bason N."/>
            <person name="Farbrother P."/>
            <person name="Desany B."/>
            <person name="Just E."/>
            <person name="Morio T."/>
            <person name="Rost R."/>
            <person name="Churcher C.M."/>
            <person name="Cooper J."/>
            <person name="Haydock S."/>
            <person name="van Driessche N."/>
            <person name="Cronin A."/>
            <person name="Goodhead I."/>
            <person name="Muzny D.M."/>
            <person name="Mourier T."/>
            <person name="Pain A."/>
            <person name="Lu M."/>
            <person name="Harper D."/>
            <person name="Lindsay R."/>
            <person name="Hauser H."/>
            <person name="James K.D."/>
            <person name="Quiles M."/>
            <person name="Madan Babu M."/>
            <person name="Saito T."/>
            <person name="Buchrieser C."/>
            <person name="Wardroper A."/>
            <person name="Felder M."/>
            <person name="Thangavelu M."/>
            <person name="Johnson D."/>
            <person name="Knights A."/>
            <person name="Loulseged H."/>
            <person name="Mungall K.L."/>
            <person name="Oliver K."/>
            <person name="Price C."/>
            <person name="Quail M.A."/>
            <person name="Urushihara H."/>
            <person name="Hernandez J."/>
            <person name="Rabbinowitsch E."/>
            <person name="Steffen D."/>
            <person name="Sanders M."/>
            <person name="Ma J."/>
            <person name="Kohara Y."/>
            <person name="Sharp S."/>
            <person name="Simmonds M.N."/>
            <person name="Spiegler S."/>
            <person name="Tivey A."/>
            <person name="Sugano S."/>
            <person name="White B."/>
            <person name="Walker D."/>
            <person name="Woodward J.R."/>
            <person name="Winckler T."/>
            <person name="Tanaka Y."/>
            <person name="Shaulsky G."/>
            <person name="Schleicher M."/>
            <person name="Weinstock G.M."/>
            <person name="Rosenthal A."/>
            <person name="Cox E.C."/>
            <person name="Chisholm R.L."/>
            <person name="Gibbs R.A."/>
            <person name="Loomis W.F."/>
            <person name="Platzer M."/>
            <person name="Kay R.R."/>
            <person name="Williams J.G."/>
            <person name="Dear P.H."/>
            <person name="Noegel A.A."/>
            <person name="Barrell B.G."/>
            <person name="Kuspa A."/>
        </authorList>
    </citation>
    <scope>NUCLEOTIDE SEQUENCE [LARGE SCALE GENOMIC DNA]</scope>
    <source>
        <strain>AX4</strain>
    </source>
</reference>
<sequence length="517" mass="56409">MNKTIILLLISIIFEIVISSSVDGNYPAGGLYFGVSSNFLVGESEKFTQYVQDELLAMDLPDQSGDSDGVQYSFTHFKLALNLQDFFYAQLGPGVFQMGWDTITFNLQWEYEICVKKVVKLCESGTITVYTASGQSVSLGTTLDVLFNSSNAKIEATSTVMPFEAGAVVASVHCTDSVCLIPINDIVSEVSSQFVSQVTNGVTKAINDKAPSIEQLFTPIKQIPITMDSGNQYWIDLEGCLVEANYSSNSPSTITAAINGGIVLENTDGNFVYPTQTPSYVPYDSQMESFTSDYCITITGYFIETLLDAVLVPEFPMTIQPSQIPASSPVQLNTSSDFFSGIAPNLTSKYPNVGIQVNLMPPTIPTVTINSSAIILTDFEISTSFLVLTDNDDAIPVFNVLFKFDAEIQTTLYTDSVSVFSLNSTLLSITPNVTITDSNVGSVDATGFVQLIEMAQSIIKIPSITYPVPSKYSITNVNSQLGDQIIQLTFDLIENSTNQKYLKKSVNLNLKKKKKKK</sequence>
<gene>
    <name type="ORF">DDB_G0288097</name>
</gene>
<comment type="subcellular location">
    <subcellularLocation>
        <location evidence="2">Secreted</location>
    </subcellularLocation>
</comment>
<comment type="similarity">
    <text evidence="2">Belongs to the UPF0522 family.</text>
</comment>
<protein>
    <recommendedName>
        <fullName>UPF0522 protein B</fullName>
    </recommendedName>
</protein>
<keyword id="KW-0325">Glycoprotein</keyword>
<keyword id="KW-1185">Reference proteome</keyword>
<keyword id="KW-0964">Secreted</keyword>
<keyword id="KW-0732">Signal</keyword>
<accession>Q54JE7</accession>
<dbReference type="EMBL" id="AAFI02000109">
    <property type="protein sequence ID" value="EAL63393.1"/>
    <property type="molecule type" value="Genomic_DNA"/>
</dbReference>
<dbReference type="RefSeq" id="XP_636903.1">
    <property type="nucleotide sequence ID" value="XM_631811.1"/>
</dbReference>
<dbReference type="SMR" id="Q54JE7"/>
<dbReference type="FunCoup" id="Q54JE7">
    <property type="interactions" value="2"/>
</dbReference>
<dbReference type="GlyGen" id="Q54JE7">
    <property type="glycosylation" value="8 sites"/>
</dbReference>
<dbReference type="PaxDb" id="44689-DDB0187782"/>
<dbReference type="EnsemblProtists" id="EAL63393">
    <property type="protein sequence ID" value="EAL63393"/>
    <property type="gene ID" value="DDB_G0288097"/>
</dbReference>
<dbReference type="GeneID" id="8626458"/>
<dbReference type="KEGG" id="ddi:DDB_G0288097"/>
<dbReference type="dictyBase" id="DDB_G0288097">
    <property type="gene designation" value="bpiB"/>
</dbReference>
<dbReference type="VEuPathDB" id="AmoebaDB:DDB_G0288097"/>
<dbReference type="eggNOG" id="ENOG502SSE2">
    <property type="taxonomic scope" value="Eukaryota"/>
</dbReference>
<dbReference type="HOGENOM" id="CLU_542317_0_0_1"/>
<dbReference type="InParanoid" id="Q54JE7"/>
<dbReference type="OMA" id="CITITGY"/>
<dbReference type="PhylomeDB" id="Q54JE7"/>
<dbReference type="Reactome" id="R-DDI-166016">
    <property type="pathway name" value="Toll Like Receptor 4 (TLR4) Cascade"/>
</dbReference>
<dbReference type="Reactome" id="R-DDI-5686938">
    <property type="pathway name" value="Regulation of TLR by endogenous ligand"/>
</dbReference>
<dbReference type="PRO" id="PR:Q54JE7"/>
<dbReference type="Proteomes" id="UP000002195">
    <property type="component" value="Chromosome 5"/>
</dbReference>
<dbReference type="GO" id="GO:0005576">
    <property type="term" value="C:extracellular region"/>
    <property type="evidence" value="ECO:0007669"/>
    <property type="project" value="UniProtKB-SubCell"/>
</dbReference>
<dbReference type="GO" id="GO:0008289">
    <property type="term" value="F:lipid binding"/>
    <property type="evidence" value="ECO:0007669"/>
    <property type="project" value="InterPro"/>
</dbReference>
<dbReference type="Gene3D" id="3.15.10.10">
    <property type="entry name" value="Bactericidal permeability-increasing protein, domain 1"/>
    <property type="match status" value="1"/>
</dbReference>
<dbReference type="Gene3D" id="3.15.20.10">
    <property type="entry name" value="Bactericidal permeability-increasing protein, domain 2"/>
    <property type="match status" value="1"/>
</dbReference>
<dbReference type="InterPro" id="IPR017943">
    <property type="entry name" value="Bactericidal_perm-incr_a/b_dom"/>
</dbReference>
<dbReference type="InterPro" id="IPR032942">
    <property type="entry name" value="BPI/LBP/Plunc"/>
</dbReference>
<dbReference type="InterPro" id="IPR001124">
    <property type="entry name" value="Lipid-bd_serum_glycop_C"/>
</dbReference>
<dbReference type="PANTHER" id="PTHR10504">
    <property type="entry name" value="BACTERICIDAL PERMEABILITY-INCREASING BPI PROTEIN-RELATED"/>
    <property type="match status" value="1"/>
</dbReference>
<dbReference type="PANTHER" id="PTHR10504:SF142">
    <property type="entry name" value="UPF0522 PROTEIN A-RELATED"/>
    <property type="match status" value="1"/>
</dbReference>
<dbReference type="Pfam" id="PF02886">
    <property type="entry name" value="LBP_BPI_CETP_C"/>
    <property type="match status" value="1"/>
</dbReference>
<dbReference type="SUPFAM" id="SSF55394">
    <property type="entry name" value="Bactericidal permeability-increasing protein, BPI"/>
    <property type="match status" value="1"/>
</dbReference>
<organism>
    <name type="scientific">Dictyostelium discoideum</name>
    <name type="common">Social amoeba</name>
    <dbReference type="NCBI Taxonomy" id="44689"/>
    <lineage>
        <taxon>Eukaryota</taxon>
        <taxon>Amoebozoa</taxon>
        <taxon>Evosea</taxon>
        <taxon>Eumycetozoa</taxon>
        <taxon>Dictyostelia</taxon>
        <taxon>Dictyosteliales</taxon>
        <taxon>Dictyosteliaceae</taxon>
        <taxon>Dictyostelium</taxon>
    </lineage>
</organism>
<proteinExistence type="inferred from homology"/>